<keyword id="KW-0963">Cytoplasm</keyword>
<keyword id="KW-0312">Gluconeogenesis</keyword>
<keyword id="KW-0324">Glycolysis</keyword>
<keyword id="KW-0413">Isomerase</keyword>
<keyword id="KW-1185">Reference proteome</keyword>
<proteinExistence type="inferred from homology"/>
<name>G6PI_DICDI</name>
<organism>
    <name type="scientific">Dictyostelium discoideum</name>
    <name type="common">Social amoeba</name>
    <dbReference type="NCBI Taxonomy" id="44689"/>
    <lineage>
        <taxon>Eukaryota</taxon>
        <taxon>Amoebozoa</taxon>
        <taxon>Evosea</taxon>
        <taxon>Eumycetozoa</taxon>
        <taxon>Dictyostelia</taxon>
        <taxon>Dictyosteliales</taxon>
        <taxon>Dictyosteliaceae</taxon>
        <taxon>Dictyostelium</taxon>
    </lineage>
</organism>
<gene>
    <name type="primary">gpi</name>
    <name type="synonym">g6pi</name>
    <name type="synonym">pgi</name>
    <name type="ORF">DDB_G0283673</name>
</gene>
<protein>
    <recommendedName>
        <fullName>Glucose-6-phosphate isomerase</fullName>
        <shortName>GPI</shortName>
        <ecNumber>5.3.1.9</ecNumber>
    </recommendedName>
    <alternativeName>
        <fullName>Phosphoglucose isomerase</fullName>
        <shortName>PGI</shortName>
    </alternativeName>
    <alternativeName>
        <fullName>Phosphohexose isomerase</fullName>
        <shortName>PHI</shortName>
    </alternativeName>
</protein>
<accession>Q5V9E9</accession>
<accession>Q54QR6</accession>
<feature type="chain" id="PRO_0000315252" description="Glucose-6-phosphate isomerase">
    <location>
        <begin position="1"/>
        <end position="561"/>
    </location>
</feature>
<feature type="active site" description="Proton donor" evidence="1">
    <location>
        <position position="366"/>
    </location>
</feature>
<feature type="active site" evidence="1">
    <location>
        <position position="397"/>
    </location>
</feature>
<feature type="active site" evidence="1">
    <location>
        <position position="525"/>
    </location>
</feature>
<dbReference type="EC" id="5.3.1.9"/>
<dbReference type="EMBL" id="AY581146">
    <property type="protein sequence ID" value="AAT92030.1"/>
    <property type="molecule type" value="Genomic_DNA"/>
</dbReference>
<dbReference type="EMBL" id="AAFI02000056">
    <property type="protein sequence ID" value="EAL65603.1"/>
    <property type="molecule type" value="Genomic_DNA"/>
</dbReference>
<dbReference type="RefSeq" id="XP_638957.1">
    <property type="nucleotide sequence ID" value="XM_633865.1"/>
</dbReference>
<dbReference type="SMR" id="Q5V9E9"/>
<dbReference type="FunCoup" id="Q5V9E9">
    <property type="interactions" value="604"/>
</dbReference>
<dbReference type="STRING" id="44689.Q5V9E9"/>
<dbReference type="PaxDb" id="44689-DDB0231026"/>
<dbReference type="EnsemblProtists" id="EAL65603">
    <property type="protein sequence ID" value="EAL65603"/>
    <property type="gene ID" value="DDB_G0283673"/>
</dbReference>
<dbReference type="GeneID" id="8624197"/>
<dbReference type="KEGG" id="ddi:DDB_G0283673"/>
<dbReference type="dictyBase" id="DDB_G0283673">
    <property type="gene designation" value="gpi"/>
</dbReference>
<dbReference type="VEuPathDB" id="AmoebaDB:DDB_G0283673"/>
<dbReference type="eggNOG" id="KOG2446">
    <property type="taxonomic scope" value="Eukaryota"/>
</dbReference>
<dbReference type="HOGENOM" id="CLU_017947_3_1_1"/>
<dbReference type="InParanoid" id="Q5V9E9"/>
<dbReference type="OMA" id="MHDVERC"/>
<dbReference type="PhylomeDB" id="Q5V9E9"/>
<dbReference type="Reactome" id="R-DDI-5628897">
    <property type="pathway name" value="TP53 Regulates Metabolic Genes"/>
</dbReference>
<dbReference type="Reactome" id="R-DDI-6798695">
    <property type="pathway name" value="Neutrophil degranulation"/>
</dbReference>
<dbReference type="Reactome" id="R-DDI-70171">
    <property type="pathway name" value="Glycolysis"/>
</dbReference>
<dbReference type="Reactome" id="R-DDI-70263">
    <property type="pathway name" value="Gluconeogenesis"/>
</dbReference>
<dbReference type="UniPathway" id="UPA00109">
    <property type="reaction ID" value="UER00181"/>
</dbReference>
<dbReference type="PRO" id="PR:Q5V9E9"/>
<dbReference type="Proteomes" id="UP000002195">
    <property type="component" value="Chromosome 4"/>
</dbReference>
<dbReference type="GO" id="GO:0005829">
    <property type="term" value="C:cytosol"/>
    <property type="evidence" value="ECO:0000318"/>
    <property type="project" value="GO_Central"/>
</dbReference>
<dbReference type="GO" id="GO:0097367">
    <property type="term" value="F:carbohydrate derivative binding"/>
    <property type="evidence" value="ECO:0007669"/>
    <property type="project" value="InterPro"/>
</dbReference>
<dbReference type="GO" id="GO:0004347">
    <property type="term" value="F:glucose-6-phosphate isomerase activity"/>
    <property type="evidence" value="ECO:0000318"/>
    <property type="project" value="GO_Central"/>
</dbReference>
<dbReference type="GO" id="GO:0048029">
    <property type="term" value="F:monosaccharide binding"/>
    <property type="evidence" value="ECO:0000318"/>
    <property type="project" value="GO_Central"/>
</dbReference>
<dbReference type="GO" id="GO:0006094">
    <property type="term" value="P:gluconeogenesis"/>
    <property type="evidence" value="ECO:0000318"/>
    <property type="project" value="GO_Central"/>
</dbReference>
<dbReference type="GO" id="GO:0051156">
    <property type="term" value="P:glucose 6-phosphate metabolic process"/>
    <property type="evidence" value="ECO:0000318"/>
    <property type="project" value="GO_Central"/>
</dbReference>
<dbReference type="GO" id="GO:0006096">
    <property type="term" value="P:glycolytic process"/>
    <property type="evidence" value="ECO:0000318"/>
    <property type="project" value="GO_Central"/>
</dbReference>
<dbReference type="CDD" id="cd05015">
    <property type="entry name" value="SIS_PGI_1"/>
    <property type="match status" value="1"/>
</dbReference>
<dbReference type="CDD" id="cd05016">
    <property type="entry name" value="SIS_PGI_2"/>
    <property type="match status" value="1"/>
</dbReference>
<dbReference type="FunFam" id="1.10.1390.10:FF:000001">
    <property type="entry name" value="Glucose-6-phosphate isomerase"/>
    <property type="match status" value="1"/>
</dbReference>
<dbReference type="FunFam" id="3.40.50.10490:FF:000004">
    <property type="entry name" value="Glucose-6-phosphate isomerase"/>
    <property type="match status" value="1"/>
</dbReference>
<dbReference type="Gene3D" id="1.10.1390.10">
    <property type="match status" value="1"/>
</dbReference>
<dbReference type="Gene3D" id="3.40.50.10490">
    <property type="entry name" value="Glucose-6-phosphate isomerase like protein, domain 1"/>
    <property type="match status" value="2"/>
</dbReference>
<dbReference type="HAMAP" id="MF_00473">
    <property type="entry name" value="G6P_isomerase"/>
    <property type="match status" value="1"/>
</dbReference>
<dbReference type="InterPro" id="IPR001672">
    <property type="entry name" value="G6P_Isomerase"/>
</dbReference>
<dbReference type="InterPro" id="IPR023096">
    <property type="entry name" value="G6P_Isomerase_C"/>
</dbReference>
<dbReference type="InterPro" id="IPR018189">
    <property type="entry name" value="Phosphoglucose_isomerase_CS"/>
</dbReference>
<dbReference type="InterPro" id="IPR046348">
    <property type="entry name" value="SIS_dom_sf"/>
</dbReference>
<dbReference type="InterPro" id="IPR035476">
    <property type="entry name" value="SIS_PGI_1"/>
</dbReference>
<dbReference type="InterPro" id="IPR035482">
    <property type="entry name" value="SIS_PGI_2"/>
</dbReference>
<dbReference type="NCBIfam" id="NF001211">
    <property type="entry name" value="PRK00179.1"/>
    <property type="match status" value="1"/>
</dbReference>
<dbReference type="PANTHER" id="PTHR11469">
    <property type="entry name" value="GLUCOSE-6-PHOSPHATE ISOMERASE"/>
    <property type="match status" value="1"/>
</dbReference>
<dbReference type="PANTHER" id="PTHR11469:SF1">
    <property type="entry name" value="GLUCOSE-6-PHOSPHATE ISOMERASE"/>
    <property type="match status" value="1"/>
</dbReference>
<dbReference type="Pfam" id="PF00342">
    <property type="entry name" value="PGI"/>
    <property type="match status" value="1"/>
</dbReference>
<dbReference type="PRINTS" id="PR00662">
    <property type="entry name" value="G6PISOMERASE"/>
</dbReference>
<dbReference type="SUPFAM" id="SSF53697">
    <property type="entry name" value="SIS domain"/>
    <property type="match status" value="1"/>
</dbReference>
<dbReference type="PROSITE" id="PS00765">
    <property type="entry name" value="P_GLUCOSE_ISOMERASE_1"/>
    <property type="match status" value="1"/>
</dbReference>
<dbReference type="PROSITE" id="PS00174">
    <property type="entry name" value="P_GLUCOSE_ISOMERASE_2"/>
    <property type="match status" value="1"/>
</dbReference>
<dbReference type="PROSITE" id="PS51463">
    <property type="entry name" value="P_GLUCOSE_ISOMERASE_3"/>
    <property type="match status" value="1"/>
</dbReference>
<evidence type="ECO:0000250" key="1"/>
<evidence type="ECO:0000305" key="2"/>
<reference key="1">
    <citation type="submission" date="2004-03" db="EMBL/GenBank/DDBJ databases">
        <title>Cryptosporidium parvum: phylogenomic evidence for organelle loss, intracellular and horizontal gene transfer.</title>
        <authorList>
            <person name="Huang J."/>
            <person name="Mullapudi N."/>
            <person name="Lancto C."/>
            <person name="Scott M."/>
            <person name="Abrahamsen M."/>
            <person name="Kissinger J.C."/>
        </authorList>
    </citation>
    <scope>NUCLEOTIDE SEQUENCE [GENOMIC DNA]</scope>
</reference>
<reference key="2">
    <citation type="journal article" date="2005" name="Nature">
        <title>The genome of the social amoeba Dictyostelium discoideum.</title>
        <authorList>
            <person name="Eichinger L."/>
            <person name="Pachebat J.A."/>
            <person name="Gloeckner G."/>
            <person name="Rajandream M.A."/>
            <person name="Sucgang R."/>
            <person name="Berriman M."/>
            <person name="Song J."/>
            <person name="Olsen R."/>
            <person name="Szafranski K."/>
            <person name="Xu Q."/>
            <person name="Tunggal B."/>
            <person name="Kummerfeld S."/>
            <person name="Madera M."/>
            <person name="Konfortov B.A."/>
            <person name="Rivero F."/>
            <person name="Bankier A.T."/>
            <person name="Lehmann R."/>
            <person name="Hamlin N."/>
            <person name="Davies R."/>
            <person name="Gaudet P."/>
            <person name="Fey P."/>
            <person name="Pilcher K."/>
            <person name="Chen G."/>
            <person name="Saunders D."/>
            <person name="Sodergren E.J."/>
            <person name="Davis P."/>
            <person name="Kerhornou A."/>
            <person name="Nie X."/>
            <person name="Hall N."/>
            <person name="Anjard C."/>
            <person name="Hemphill L."/>
            <person name="Bason N."/>
            <person name="Farbrother P."/>
            <person name="Desany B."/>
            <person name="Just E."/>
            <person name="Morio T."/>
            <person name="Rost R."/>
            <person name="Churcher C.M."/>
            <person name="Cooper J."/>
            <person name="Haydock S."/>
            <person name="van Driessche N."/>
            <person name="Cronin A."/>
            <person name="Goodhead I."/>
            <person name="Muzny D.M."/>
            <person name="Mourier T."/>
            <person name="Pain A."/>
            <person name="Lu M."/>
            <person name="Harper D."/>
            <person name="Lindsay R."/>
            <person name="Hauser H."/>
            <person name="James K.D."/>
            <person name="Quiles M."/>
            <person name="Madan Babu M."/>
            <person name="Saito T."/>
            <person name="Buchrieser C."/>
            <person name="Wardroper A."/>
            <person name="Felder M."/>
            <person name="Thangavelu M."/>
            <person name="Johnson D."/>
            <person name="Knights A."/>
            <person name="Loulseged H."/>
            <person name="Mungall K.L."/>
            <person name="Oliver K."/>
            <person name="Price C."/>
            <person name="Quail M.A."/>
            <person name="Urushihara H."/>
            <person name="Hernandez J."/>
            <person name="Rabbinowitsch E."/>
            <person name="Steffen D."/>
            <person name="Sanders M."/>
            <person name="Ma J."/>
            <person name="Kohara Y."/>
            <person name="Sharp S."/>
            <person name="Simmonds M.N."/>
            <person name="Spiegler S."/>
            <person name="Tivey A."/>
            <person name="Sugano S."/>
            <person name="White B."/>
            <person name="Walker D."/>
            <person name="Woodward J.R."/>
            <person name="Winckler T."/>
            <person name="Tanaka Y."/>
            <person name="Shaulsky G."/>
            <person name="Schleicher M."/>
            <person name="Weinstock G.M."/>
            <person name="Rosenthal A."/>
            <person name="Cox E.C."/>
            <person name="Chisholm R.L."/>
            <person name="Gibbs R.A."/>
            <person name="Loomis W.F."/>
            <person name="Platzer M."/>
            <person name="Kay R.R."/>
            <person name="Williams J.G."/>
            <person name="Dear P.H."/>
            <person name="Noegel A.A."/>
            <person name="Barrell B.G."/>
            <person name="Kuspa A."/>
        </authorList>
    </citation>
    <scope>NUCLEOTIDE SEQUENCE [LARGE SCALE GENOMIC DNA]</scope>
    <source>
        <strain>AX4</strain>
    </source>
</reference>
<comment type="catalytic activity">
    <reaction>
        <text>alpha-D-glucose 6-phosphate = beta-D-fructose 6-phosphate</text>
        <dbReference type="Rhea" id="RHEA:11816"/>
        <dbReference type="ChEBI" id="CHEBI:57634"/>
        <dbReference type="ChEBI" id="CHEBI:58225"/>
        <dbReference type="EC" id="5.3.1.9"/>
    </reaction>
</comment>
<comment type="pathway">
    <text>Carbohydrate degradation; glycolysis; D-glyceraldehyde 3-phosphate and glycerone phosphate from D-glucose: step 2/4.</text>
</comment>
<comment type="subcellular location">
    <subcellularLocation>
        <location evidence="1">Cytoplasm</location>
    </subcellularLocation>
</comment>
<comment type="similarity">
    <text evidence="2">Belongs to the GPI family.</text>
</comment>
<sequence length="561" mass="63465">MEEFKNLKEHYENIGKNINMRKEFESNYGATRFKDFSKEVNISKQVGTILLDYSKNRINKETMDLLFELARASKVEEMRNSMFQGEKINITEDRAVLHTALRNRDPSAVIKVDGENVIPSVRKVLDKMRSFSERVRSGQWKGYTGKTITDVVNIGIGGSDLGPVMVTQALKNYANDKVMRAHFVSNIDGTHLAETVKHLCPETTLFIVASKTFTTQETITNAQSARSWFLEKIGGSSVSADVQKHAIGQHFVALSTNEQEVTKFGILKENMFEFWDWVGGRYSVWSAIGLSVALYVGMDHFESFLEGAYHMDQHFLNTPLELNLPVIMGLLGVWYNNFFGCQTQAILPYDQYLSRFPAYFQQGDMESNGKSVQRNGERVTHSTGPIIWGEPGTNGQHAFYQLIHQGQKIIPCDFIASVESHNPLGKHHQILLSNFFAQTEALMKGKNEQEVTNELTKEGLSQEKIKQLLPHKVFEGNRPTNSIFLHKLTPHSLGALIALYEHKIFVQGIIWNINSFDQWGVELGKQLAKSILPELSDNNEVSTHDSSTNGLINFYKSNSKL</sequence>